<reference key="1">
    <citation type="journal article" date="2006" name="Nat. Genet.">
        <title>The multidrug-resistant human pathogen Clostridium difficile has a highly mobile, mosaic genome.</title>
        <authorList>
            <person name="Sebaihia M."/>
            <person name="Wren B.W."/>
            <person name="Mullany P."/>
            <person name="Fairweather N.F."/>
            <person name="Minton N."/>
            <person name="Stabler R."/>
            <person name="Thomson N.R."/>
            <person name="Roberts A.P."/>
            <person name="Cerdeno-Tarraga A.M."/>
            <person name="Wang H."/>
            <person name="Holden M.T.G."/>
            <person name="Wright A."/>
            <person name="Churcher C."/>
            <person name="Quail M.A."/>
            <person name="Baker S."/>
            <person name="Bason N."/>
            <person name="Brooks K."/>
            <person name="Chillingworth T."/>
            <person name="Cronin A."/>
            <person name="Davis P."/>
            <person name="Dowd L."/>
            <person name="Fraser A."/>
            <person name="Feltwell T."/>
            <person name="Hance Z."/>
            <person name="Holroyd S."/>
            <person name="Jagels K."/>
            <person name="Moule S."/>
            <person name="Mungall K."/>
            <person name="Price C."/>
            <person name="Rabbinowitsch E."/>
            <person name="Sharp S."/>
            <person name="Simmonds M."/>
            <person name="Stevens K."/>
            <person name="Unwin L."/>
            <person name="Whithead S."/>
            <person name="Dupuy B."/>
            <person name="Dougan G."/>
            <person name="Barrell B."/>
            <person name="Parkhill J."/>
        </authorList>
    </citation>
    <scope>NUCLEOTIDE SEQUENCE [LARGE SCALE GENOMIC DNA]</scope>
    <source>
        <strain>630</strain>
    </source>
</reference>
<proteinExistence type="inferred from homology"/>
<keyword id="KW-0030">Aminoacyl-tRNA synthetase</keyword>
<keyword id="KW-0067">ATP-binding</keyword>
<keyword id="KW-0963">Cytoplasm</keyword>
<keyword id="KW-0436">Ligase</keyword>
<keyword id="KW-0479">Metal-binding</keyword>
<keyword id="KW-0547">Nucleotide-binding</keyword>
<keyword id="KW-0648">Protein biosynthesis</keyword>
<keyword id="KW-1185">Reference proteome</keyword>
<keyword id="KW-0694">RNA-binding</keyword>
<keyword id="KW-0820">tRNA-binding</keyword>
<keyword id="KW-0862">Zinc</keyword>
<organism>
    <name type="scientific">Clostridioides difficile (strain 630)</name>
    <name type="common">Peptoclostridium difficile</name>
    <dbReference type="NCBI Taxonomy" id="272563"/>
    <lineage>
        <taxon>Bacteria</taxon>
        <taxon>Bacillati</taxon>
        <taxon>Bacillota</taxon>
        <taxon>Clostridia</taxon>
        <taxon>Peptostreptococcales</taxon>
        <taxon>Peptostreptococcaceae</taxon>
        <taxon>Clostridioides</taxon>
    </lineage>
</organism>
<comment type="function">
    <text evidence="1">Catalyzes the attachment of threonine to tRNA(Thr) in a two-step reaction: L-threonine is first activated by ATP to form Thr-AMP and then transferred to the acceptor end of tRNA(Thr). Also edits incorrectly charged L-seryl-tRNA(Thr).</text>
</comment>
<comment type="catalytic activity">
    <reaction evidence="1">
        <text>tRNA(Thr) + L-threonine + ATP = L-threonyl-tRNA(Thr) + AMP + diphosphate + H(+)</text>
        <dbReference type="Rhea" id="RHEA:24624"/>
        <dbReference type="Rhea" id="RHEA-COMP:9670"/>
        <dbReference type="Rhea" id="RHEA-COMP:9704"/>
        <dbReference type="ChEBI" id="CHEBI:15378"/>
        <dbReference type="ChEBI" id="CHEBI:30616"/>
        <dbReference type="ChEBI" id="CHEBI:33019"/>
        <dbReference type="ChEBI" id="CHEBI:57926"/>
        <dbReference type="ChEBI" id="CHEBI:78442"/>
        <dbReference type="ChEBI" id="CHEBI:78534"/>
        <dbReference type="ChEBI" id="CHEBI:456215"/>
        <dbReference type="EC" id="6.1.1.3"/>
    </reaction>
</comment>
<comment type="cofactor">
    <cofactor evidence="1">
        <name>Zn(2+)</name>
        <dbReference type="ChEBI" id="CHEBI:29105"/>
    </cofactor>
    <text evidence="1">Binds 1 zinc ion per subunit.</text>
</comment>
<comment type="subunit">
    <text evidence="1">Homodimer.</text>
</comment>
<comment type="subcellular location">
    <subcellularLocation>
        <location evidence="1">Cytoplasm</location>
    </subcellularLocation>
</comment>
<comment type="similarity">
    <text evidence="1">Belongs to the class-II aminoacyl-tRNA synthetase family.</text>
</comment>
<feature type="chain" id="PRO_1000071675" description="Threonine--tRNA ligase">
    <location>
        <begin position="1"/>
        <end position="639"/>
    </location>
</feature>
<feature type="domain" description="TGS" evidence="2">
    <location>
        <begin position="1"/>
        <end position="61"/>
    </location>
</feature>
<feature type="region of interest" description="Catalytic" evidence="1">
    <location>
        <begin position="242"/>
        <end position="532"/>
    </location>
</feature>
<feature type="binding site" evidence="1">
    <location>
        <position position="333"/>
    </location>
    <ligand>
        <name>Zn(2+)</name>
        <dbReference type="ChEBI" id="CHEBI:29105"/>
    </ligand>
</feature>
<feature type="binding site" evidence="1">
    <location>
        <position position="384"/>
    </location>
    <ligand>
        <name>Zn(2+)</name>
        <dbReference type="ChEBI" id="CHEBI:29105"/>
    </ligand>
</feature>
<feature type="binding site" evidence="1">
    <location>
        <position position="509"/>
    </location>
    <ligand>
        <name>Zn(2+)</name>
        <dbReference type="ChEBI" id="CHEBI:29105"/>
    </ligand>
</feature>
<gene>
    <name evidence="1" type="primary">thrS</name>
    <name type="ordered locus">CD630_05740</name>
</gene>
<protein>
    <recommendedName>
        <fullName evidence="1">Threonine--tRNA ligase</fullName>
        <ecNumber evidence="1">6.1.1.3</ecNumber>
    </recommendedName>
    <alternativeName>
        <fullName evidence="1">Threonyl-tRNA synthetase</fullName>
        <shortName evidence="1">ThrRS</shortName>
    </alternativeName>
</protein>
<accession>Q189B8</accession>
<evidence type="ECO:0000255" key="1">
    <source>
        <dbReference type="HAMAP-Rule" id="MF_00184"/>
    </source>
</evidence>
<evidence type="ECO:0000255" key="2">
    <source>
        <dbReference type="PROSITE-ProRule" id="PRU01228"/>
    </source>
</evidence>
<name>SYT_CLOD6</name>
<dbReference type="EC" id="6.1.1.3" evidence="1"/>
<dbReference type="EMBL" id="AM180355">
    <property type="protein sequence ID" value="CAJ67406.1"/>
    <property type="molecule type" value="Genomic_DNA"/>
</dbReference>
<dbReference type="RefSeq" id="WP_009888359.1">
    <property type="nucleotide sequence ID" value="NZ_JAUPES010000001.1"/>
</dbReference>
<dbReference type="RefSeq" id="YP_001087049.1">
    <property type="nucleotide sequence ID" value="NC_009089.1"/>
</dbReference>
<dbReference type="SMR" id="Q189B8"/>
<dbReference type="STRING" id="272563.CD630_05740"/>
<dbReference type="EnsemblBacteria" id="CAJ67406">
    <property type="protein sequence ID" value="CAJ67406"/>
    <property type="gene ID" value="CD630_05740"/>
</dbReference>
<dbReference type="GeneID" id="66353070"/>
<dbReference type="KEGG" id="cdf:CD630_05740"/>
<dbReference type="KEGG" id="pdc:CDIF630_00687"/>
<dbReference type="PATRIC" id="fig|272563.120.peg.584"/>
<dbReference type="eggNOG" id="COG0441">
    <property type="taxonomic scope" value="Bacteria"/>
</dbReference>
<dbReference type="OrthoDB" id="9802304at2"/>
<dbReference type="PhylomeDB" id="Q189B8"/>
<dbReference type="BioCyc" id="PDIF272563:G12WB-685-MONOMER"/>
<dbReference type="Proteomes" id="UP000001978">
    <property type="component" value="Chromosome"/>
</dbReference>
<dbReference type="GO" id="GO:0005737">
    <property type="term" value="C:cytoplasm"/>
    <property type="evidence" value="ECO:0007669"/>
    <property type="project" value="UniProtKB-SubCell"/>
</dbReference>
<dbReference type="GO" id="GO:0005524">
    <property type="term" value="F:ATP binding"/>
    <property type="evidence" value="ECO:0007669"/>
    <property type="project" value="UniProtKB-UniRule"/>
</dbReference>
<dbReference type="GO" id="GO:0140096">
    <property type="term" value="F:catalytic activity, acting on a protein"/>
    <property type="evidence" value="ECO:0007669"/>
    <property type="project" value="UniProtKB-ARBA"/>
</dbReference>
<dbReference type="GO" id="GO:0046872">
    <property type="term" value="F:metal ion binding"/>
    <property type="evidence" value="ECO:0007669"/>
    <property type="project" value="UniProtKB-KW"/>
</dbReference>
<dbReference type="GO" id="GO:0004829">
    <property type="term" value="F:threonine-tRNA ligase activity"/>
    <property type="evidence" value="ECO:0007669"/>
    <property type="project" value="UniProtKB-UniRule"/>
</dbReference>
<dbReference type="GO" id="GO:0016740">
    <property type="term" value="F:transferase activity"/>
    <property type="evidence" value="ECO:0007669"/>
    <property type="project" value="UniProtKB-ARBA"/>
</dbReference>
<dbReference type="GO" id="GO:0000049">
    <property type="term" value="F:tRNA binding"/>
    <property type="evidence" value="ECO:0007669"/>
    <property type="project" value="UniProtKB-KW"/>
</dbReference>
<dbReference type="GO" id="GO:0006435">
    <property type="term" value="P:threonyl-tRNA aminoacylation"/>
    <property type="evidence" value="ECO:0007669"/>
    <property type="project" value="UniProtKB-UniRule"/>
</dbReference>
<dbReference type="CDD" id="cd01667">
    <property type="entry name" value="TGS_ThrRS"/>
    <property type="match status" value="1"/>
</dbReference>
<dbReference type="CDD" id="cd00860">
    <property type="entry name" value="ThrRS_anticodon"/>
    <property type="match status" value="1"/>
</dbReference>
<dbReference type="CDD" id="cd00771">
    <property type="entry name" value="ThrRS_core"/>
    <property type="match status" value="1"/>
</dbReference>
<dbReference type="FunFam" id="3.30.54.20:FF:000002">
    <property type="entry name" value="Threonine--tRNA ligase"/>
    <property type="match status" value="1"/>
</dbReference>
<dbReference type="FunFam" id="3.30.930.10:FF:000002">
    <property type="entry name" value="Threonine--tRNA ligase"/>
    <property type="match status" value="1"/>
</dbReference>
<dbReference type="FunFam" id="3.40.50.800:FF:000001">
    <property type="entry name" value="Threonine--tRNA ligase"/>
    <property type="match status" value="1"/>
</dbReference>
<dbReference type="FunFam" id="3.30.980.10:FF:000005">
    <property type="entry name" value="Threonyl-tRNA synthetase, mitochondrial"/>
    <property type="match status" value="1"/>
</dbReference>
<dbReference type="Gene3D" id="3.10.20.30">
    <property type="match status" value="1"/>
</dbReference>
<dbReference type="Gene3D" id="3.30.54.20">
    <property type="match status" value="1"/>
</dbReference>
<dbReference type="Gene3D" id="3.40.50.800">
    <property type="entry name" value="Anticodon-binding domain"/>
    <property type="match status" value="1"/>
</dbReference>
<dbReference type="Gene3D" id="3.30.930.10">
    <property type="entry name" value="Bira Bifunctional Protein, Domain 2"/>
    <property type="match status" value="1"/>
</dbReference>
<dbReference type="Gene3D" id="3.30.980.10">
    <property type="entry name" value="Threonyl-trna Synthetase, Chain A, domain 2"/>
    <property type="match status" value="1"/>
</dbReference>
<dbReference type="HAMAP" id="MF_00184">
    <property type="entry name" value="Thr_tRNA_synth"/>
    <property type="match status" value="1"/>
</dbReference>
<dbReference type="InterPro" id="IPR002314">
    <property type="entry name" value="aa-tRNA-synt_IIb"/>
</dbReference>
<dbReference type="InterPro" id="IPR006195">
    <property type="entry name" value="aa-tRNA-synth_II"/>
</dbReference>
<dbReference type="InterPro" id="IPR045864">
    <property type="entry name" value="aa-tRNA-synth_II/BPL/LPL"/>
</dbReference>
<dbReference type="InterPro" id="IPR004154">
    <property type="entry name" value="Anticodon-bd"/>
</dbReference>
<dbReference type="InterPro" id="IPR036621">
    <property type="entry name" value="Anticodon-bd_dom_sf"/>
</dbReference>
<dbReference type="InterPro" id="IPR012675">
    <property type="entry name" value="Beta-grasp_dom_sf"/>
</dbReference>
<dbReference type="InterPro" id="IPR004095">
    <property type="entry name" value="TGS"/>
</dbReference>
<dbReference type="InterPro" id="IPR012676">
    <property type="entry name" value="TGS-like"/>
</dbReference>
<dbReference type="InterPro" id="IPR002320">
    <property type="entry name" value="Thr-tRNA-ligase_IIa"/>
</dbReference>
<dbReference type="InterPro" id="IPR018163">
    <property type="entry name" value="Thr/Ala-tRNA-synth_IIc_edit"/>
</dbReference>
<dbReference type="InterPro" id="IPR047246">
    <property type="entry name" value="ThrRS_anticodon"/>
</dbReference>
<dbReference type="InterPro" id="IPR033728">
    <property type="entry name" value="ThrRS_core"/>
</dbReference>
<dbReference type="InterPro" id="IPR012947">
    <property type="entry name" value="tRNA_SAD"/>
</dbReference>
<dbReference type="NCBIfam" id="TIGR00418">
    <property type="entry name" value="thrS"/>
    <property type="match status" value="1"/>
</dbReference>
<dbReference type="PANTHER" id="PTHR11451:SF44">
    <property type="entry name" value="THREONINE--TRNA LIGASE, CHLOROPLASTIC_MITOCHONDRIAL 2"/>
    <property type="match status" value="1"/>
</dbReference>
<dbReference type="PANTHER" id="PTHR11451">
    <property type="entry name" value="THREONINE-TRNA LIGASE"/>
    <property type="match status" value="1"/>
</dbReference>
<dbReference type="Pfam" id="PF03129">
    <property type="entry name" value="HGTP_anticodon"/>
    <property type="match status" value="1"/>
</dbReference>
<dbReference type="Pfam" id="PF02824">
    <property type="entry name" value="TGS"/>
    <property type="match status" value="1"/>
</dbReference>
<dbReference type="Pfam" id="PF00587">
    <property type="entry name" value="tRNA-synt_2b"/>
    <property type="match status" value="1"/>
</dbReference>
<dbReference type="Pfam" id="PF07973">
    <property type="entry name" value="tRNA_SAD"/>
    <property type="match status" value="1"/>
</dbReference>
<dbReference type="PRINTS" id="PR01047">
    <property type="entry name" value="TRNASYNTHTHR"/>
</dbReference>
<dbReference type="SMART" id="SM00863">
    <property type="entry name" value="tRNA_SAD"/>
    <property type="match status" value="1"/>
</dbReference>
<dbReference type="SUPFAM" id="SSF52954">
    <property type="entry name" value="Class II aaRS ABD-related"/>
    <property type="match status" value="1"/>
</dbReference>
<dbReference type="SUPFAM" id="SSF55681">
    <property type="entry name" value="Class II aaRS and biotin synthetases"/>
    <property type="match status" value="1"/>
</dbReference>
<dbReference type="SUPFAM" id="SSF81271">
    <property type="entry name" value="TGS-like"/>
    <property type="match status" value="1"/>
</dbReference>
<dbReference type="SUPFAM" id="SSF55186">
    <property type="entry name" value="ThrRS/AlaRS common domain"/>
    <property type="match status" value="1"/>
</dbReference>
<dbReference type="PROSITE" id="PS50862">
    <property type="entry name" value="AA_TRNA_LIGASE_II"/>
    <property type="match status" value="1"/>
</dbReference>
<dbReference type="PROSITE" id="PS51880">
    <property type="entry name" value="TGS"/>
    <property type="match status" value="1"/>
</dbReference>
<sequence>MIKVALKDGSIKEFENAISVMDVAKSISEGLARNVVAASVNGEVVGLDHIIDTDCDLNLFKFEDKEGKEVFRHTSAHILAQAIKRLYPEAKLAIGPSIENGFYYDIDLDHRLVPEDLEKIEAEMKKIAKEDLKIERFELPRNEALELMKEQGEDYKVELISDLPESEIISFYKQGDFTDLCRGPHLPSTKKVKAVKLQSVAGAYWRGDENNKMLQRIYGTSFEKNKDLEEYLHLLEEAKKRDHRKLGKELGLFMIPEEGPGFPMFLPKGMELKNELLKFWREIHRKAGYIEIESPIILNRKLWETSGHWYHYKENMYTVKIDDEDYAIKPMNCPGGLIYYNSQLHSYRDFPMRVAELGRVHRHELSGALQGLMRVRAFTQDDSHIFMLPEQIKDEIKGVANLIDGIYKTFGFEYNLELSTRPENSMGSDEEWEAAENGLREALEELGLPYTINEGDGAFYGPKIDFHLKDCLGRTWQCGTIQLDMQLPRQFDNTYIGQDGEKHRPVMIHRVAFGSIERFIGILIEHYAGKFPVWLSPTQVKILPISDKFMDYANEVKKELFDKGIRVELDDRAEKIGFKIREAQLEKVPYMLIVGEKEVADNNVSVRSRDKGEIGSIKLDEFIASISKEIESRESIIQD</sequence>